<protein>
    <recommendedName>
        <fullName evidence="1">Autonomous glycyl radical cofactor</fullName>
    </recommendedName>
</protein>
<sequence length="127" mass="14268">MITGIQITKAANDDLLNSFWLLDSEKGEARCIVAKAGFAEDEVVAVSKLGDIEYREVPVEVKPEVRVEGGQHLNVNVLRRETLEDAVKHPEKYPQLTIRVSGYAVRFNSLTPEQQRDVIARTFTESL</sequence>
<organism>
    <name type="scientific">Escherichia coli O7:K1 (strain IAI39 / ExPEC)</name>
    <dbReference type="NCBI Taxonomy" id="585057"/>
    <lineage>
        <taxon>Bacteria</taxon>
        <taxon>Pseudomonadati</taxon>
        <taxon>Pseudomonadota</taxon>
        <taxon>Gammaproteobacteria</taxon>
        <taxon>Enterobacterales</taxon>
        <taxon>Enterobacteriaceae</taxon>
        <taxon>Escherichia</taxon>
    </lineage>
</organism>
<name>GRCA_ECO7I</name>
<accession>B7NRN5</accession>
<evidence type="ECO:0000255" key="1">
    <source>
        <dbReference type="HAMAP-Rule" id="MF_00806"/>
    </source>
</evidence>
<comment type="function">
    <text evidence="1">Acts as a radical domain for damaged PFL and possibly other radical proteins.</text>
</comment>
<gene>
    <name evidence="1" type="primary">grcA</name>
    <name type="ordered locus">ECIAI39_2787</name>
</gene>
<reference key="1">
    <citation type="journal article" date="2009" name="PLoS Genet.">
        <title>Organised genome dynamics in the Escherichia coli species results in highly diverse adaptive paths.</title>
        <authorList>
            <person name="Touchon M."/>
            <person name="Hoede C."/>
            <person name="Tenaillon O."/>
            <person name="Barbe V."/>
            <person name="Baeriswyl S."/>
            <person name="Bidet P."/>
            <person name="Bingen E."/>
            <person name="Bonacorsi S."/>
            <person name="Bouchier C."/>
            <person name="Bouvet O."/>
            <person name="Calteau A."/>
            <person name="Chiapello H."/>
            <person name="Clermont O."/>
            <person name="Cruveiller S."/>
            <person name="Danchin A."/>
            <person name="Diard M."/>
            <person name="Dossat C."/>
            <person name="Karoui M.E."/>
            <person name="Frapy E."/>
            <person name="Garry L."/>
            <person name="Ghigo J.M."/>
            <person name="Gilles A.M."/>
            <person name="Johnson J."/>
            <person name="Le Bouguenec C."/>
            <person name="Lescat M."/>
            <person name="Mangenot S."/>
            <person name="Martinez-Jehanne V."/>
            <person name="Matic I."/>
            <person name="Nassif X."/>
            <person name="Oztas S."/>
            <person name="Petit M.A."/>
            <person name="Pichon C."/>
            <person name="Rouy Z."/>
            <person name="Ruf C.S."/>
            <person name="Schneider D."/>
            <person name="Tourret J."/>
            <person name="Vacherie B."/>
            <person name="Vallenet D."/>
            <person name="Medigue C."/>
            <person name="Rocha E.P.C."/>
            <person name="Denamur E."/>
        </authorList>
    </citation>
    <scope>NUCLEOTIDE SEQUENCE [LARGE SCALE GENOMIC DNA]</scope>
    <source>
        <strain>IAI39 / ExPEC</strain>
    </source>
</reference>
<dbReference type="EMBL" id="CU928164">
    <property type="protein sequence ID" value="CAR18909.1"/>
    <property type="molecule type" value="Genomic_DNA"/>
</dbReference>
<dbReference type="RefSeq" id="WP_000627804.1">
    <property type="nucleotide sequence ID" value="NC_011750.1"/>
</dbReference>
<dbReference type="RefSeq" id="YP_002408723.1">
    <property type="nucleotide sequence ID" value="NC_011750.1"/>
</dbReference>
<dbReference type="SMR" id="B7NRN5"/>
<dbReference type="STRING" id="585057.ECIAI39_2787"/>
<dbReference type="GeneID" id="89517377"/>
<dbReference type="KEGG" id="ect:ECIAI39_2787"/>
<dbReference type="PATRIC" id="fig|585057.6.peg.2895"/>
<dbReference type="HOGENOM" id="CLU_133780_0_0_6"/>
<dbReference type="Proteomes" id="UP000000749">
    <property type="component" value="Chromosome"/>
</dbReference>
<dbReference type="GO" id="GO:0005829">
    <property type="term" value="C:cytosol"/>
    <property type="evidence" value="ECO:0007669"/>
    <property type="project" value="TreeGrafter"/>
</dbReference>
<dbReference type="GO" id="GO:0008861">
    <property type="term" value="F:formate C-acetyltransferase activity"/>
    <property type="evidence" value="ECO:0007669"/>
    <property type="project" value="TreeGrafter"/>
</dbReference>
<dbReference type="FunFam" id="3.20.70.20:FF:000002">
    <property type="entry name" value="Autonomous glycyl radical cofactor"/>
    <property type="match status" value="1"/>
</dbReference>
<dbReference type="Gene3D" id="3.20.70.20">
    <property type="match status" value="1"/>
</dbReference>
<dbReference type="HAMAP" id="MF_00806">
    <property type="entry name" value="GrcA"/>
    <property type="match status" value="1"/>
</dbReference>
<dbReference type="InterPro" id="IPR050244">
    <property type="entry name" value="Auton_GlycylRad_Cofactor"/>
</dbReference>
<dbReference type="InterPro" id="IPR019777">
    <property type="entry name" value="Form_AcTrfase_GR_CS"/>
</dbReference>
<dbReference type="InterPro" id="IPR001150">
    <property type="entry name" value="Gly_radical"/>
</dbReference>
<dbReference type="InterPro" id="IPR011140">
    <property type="entry name" value="Glycyl_radical_cofactor_GrcA"/>
</dbReference>
<dbReference type="NCBIfam" id="TIGR04365">
    <property type="entry name" value="spare_glycyl"/>
    <property type="match status" value="1"/>
</dbReference>
<dbReference type="PANTHER" id="PTHR30191">
    <property type="entry name" value="FORMATE ACETYLTRANSFERASE"/>
    <property type="match status" value="1"/>
</dbReference>
<dbReference type="PANTHER" id="PTHR30191:SF0">
    <property type="entry name" value="FORMATE ACETYLTRANSFERASE 1"/>
    <property type="match status" value="1"/>
</dbReference>
<dbReference type="Pfam" id="PF01228">
    <property type="entry name" value="Gly_radical"/>
    <property type="match status" value="1"/>
</dbReference>
<dbReference type="PIRSF" id="PIRSF000378">
    <property type="entry name" value="Gly_radicl_yfiD"/>
    <property type="match status" value="1"/>
</dbReference>
<dbReference type="SUPFAM" id="SSF51998">
    <property type="entry name" value="PFL-like glycyl radical enzymes"/>
    <property type="match status" value="1"/>
</dbReference>
<dbReference type="PROSITE" id="PS00850">
    <property type="entry name" value="GLY_RADICAL_1"/>
    <property type="match status" value="1"/>
</dbReference>
<dbReference type="PROSITE" id="PS51149">
    <property type="entry name" value="GLY_RADICAL_2"/>
    <property type="match status" value="1"/>
</dbReference>
<keyword id="KW-0007">Acetylation</keyword>
<keyword id="KW-0556">Organic radical</keyword>
<feature type="chain" id="PRO_1000133983" description="Autonomous glycyl radical cofactor">
    <location>
        <begin position="1"/>
        <end position="127"/>
    </location>
</feature>
<feature type="domain" description="Glycine radical" evidence="1">
    <location>
        <begin position="5"/>
        <end position="127"/>
    </location>
</feature>
<feature type="modified residue" description="N6-acetyllysine" evidence="1">
    <location>
        <position position="48"/>
    </location>
</feature>
<feature type="modified residue" description="N6-acetyllysine" evidence="1">
    <location>
        <position position="88"/>
    </location>
</feature>
<feature type="modified residue" description="N6-acetyllysine" evidence="1">
    <location>
        <position position="92"/>
    </location>
</feature>
<feature type="modified residue" description="Glycine radical" evidence="1">
    <location>
        <position position="102"/>
    </location>
</feature>
<proteinExistence type="inferred from homology"/>